<sequence>DLWNSIKDMAAAAGRAALNAVTGMVNQ</sequence>
<accession>P83914</accession>
<proteinExistence type="evidence at protein level"/>
<comment type="function">
    <text evidence="1">Has antimicrobial activity against the Gram-positive bacterium M.luteus and the yeast C.albicans. Has hemolytic activity on human and duck erythrocytes.</text>
</comment>
<comment type="mass spectrometry"/>
<name>DLP_SCHMA</name>
<feature type="peptide" id="PRO_0000044132" description="Dermaseptin-like peptide">
    <location>
        <begin position="1"/>
        <end position="27"/>
    </location>
</feature>
<keyword id="KW-0044">Antibiotic</keyword>
<keyword id="KW-0929">Antimicrobial</keyword>
<keyword id="KW-0204">Cytolysis</keyword>
<keyword id="KW-0903">Direct protein sequencing</keyword>
<keyword id="KW-0295">Fungicide</keyword>
<keyword id="KW-0354">Hemolysis</keyword>
<keyword id="KW-1185">Reference proteome</keyword>
<protein>
    <recommendedName>
        <fullName>Dermaseptin-like peptide</fullName>
    </recommendedName>
    <alternativeName>
        <fullName>SmDLP</fullName>
    </alternativeName>
</protein>
<evidence type="ECO:0000269" key="1">
    <source>
    </source>
</evidence>
<organism>
    <name type="scientific">Schistosoma mansoni</name>
    <name type="common">Blood fluke</name>
    <dbReference type="NCBI Taxonomy" id="6183"/>
    <lineage>
        <taxon>Eukaryota</taxon>
        <taxon>Metazoa</taxon>
        <taxon>Spiralia</taxon>
        <taxon>Lophotrochozoa</taxon>
        <taxon>Platyhelminthes</taxon>
        <taxon>Trematoda</taxon>
        <taxon>Digenea</taxon>
        <taxon>Strigeidida</taxon>
        <taxon>Schistosomatoidea</taxon>
        <taxon>Schistosomatidae</taxon>
        <taxon>Schistosoma</taxon>
    </lineage>
</organism>
<reference key="1">
    <citation type="journal article" date="2005" name="J. Parasitol.">
        <title>Schistosoma mansoni dermaseptin-like peptide: structural and functional characterization.</title>
        <authorList>
            <person name="Quinn G.A."/>
            <person name="Heymans R."/>
            <person name="Rondaj F."/>
            <person name="Shaw C."/>
            <person name="de Jong-Brink M."/>
        </authorList>
    </citation>
    <scope>PROTEIN SEQUENCE</scope>
    <scope>FUNCTION</scope>
    <scope>MASS SPECTROMETRY</scope>
    <source>
        <strain>Puerto Rican</strain>
        <tissue>Larva</tissue>
    </source>
</reference>
<dbReference type="InParanoid" id="P83914"/>
<dbReference type="Proteomes" id="UP000008854">
    <property type="component" value="Unassembled WGS sequence"/>
</dbReference>
<dbReference type="GO" id="GO:0042742">
    <property type="term" value="P:defense response to bacterium"/>
    <property type="evidence" value="ECO:0007669"/>
    <property type="project" value="UniProtKB-KW"/>
</dbReference>
<dbReference type="GO" id="GO:0050832">
    <property type="term" value="P:defense response to fungus"/>
    <property type="evidence" value="ECO:0007669"/>
    <property type="project" value="UniProtKB-KW"/>
</dbReference>
<dbReference type="GO" id="GO:0031640">
    <property type="term" value="P:killing of cells of another organism"/>
    <property type="evidence" value="ECO:0007669"/>
    <property type="project" value="UniProtKB-KW"/>
</dbReference>
<dbReference type="InterPro" id="IPR022731">
    <property type="entry name" value="Dermaseptin_dom"/>
</dbReference>
<dbReference type="Pfam" id="PF12121">
    <property type="entry name" value="DD_K"/>
    <property type="match status" value="1"/>
</dbReference>